<protein>
    <recommendedName>
        <fullName>Putative defensin-like protein 118</fullName>
    </recommendedName>
    <alternativeName>
        <fullName>Putative low-molecular-weight cysteine-rich protein 52</fullName>
        <shortName>Protein LCR52</shortName>
    </alternativeName>
</protein>
<organism evidence="3">
    <name type="scientific">Arabidopsis thaliana</name>
    <name type="common">Mouse-ear cress</name>
    <dbReference type="NCBI Taxonomy" id="3702"/>
    <lineage>
        <taxon>Eukaryota</taxon>
        <taxon>Viridiplantae</taxon>
        <taxon>Streptophyta</taxon>
        <taxon>Embryophyta</taxon>
        <taxon>Tracheophyta</taxon>
        <taxon>Spermatophyta</taxon>
        <taxon>Magnoliopsida</taxon>
        <taxon>eudicotyledons</taxon>
        <taxon>Gunneridae</taxon>
        <taxon>Pentapetalae</taxon>
        <taxon>rosids</taxon>
        <taxon>malvids</taxon>
        <taxon>Brassicales</taxon>
        <taxon>Brassicaceae</taxon>
        <taxon>Camelineae</taxon>
        <taxon>Arabidopsis</taxon>
    </lineage>
</organism>
<gene>
    <name type="primary">LCR52</name>
    <name type="ordered locus">At3g61175</name>
    <name type="ORF">T20K12</name>
</gene>
<name>DF118_ARATH</name>
<reference evidence="3" key="1">
    <citation type="journal article" date="2000" name="Nature">
        <title>Sequence and analysis of chromosome 3 of the plant Arabidopsis thaliana.</title>
        <authorList>
            <person name="Salanoubat M."/>
            <person name="Lemcke K."/>
            <person name="Rieger M."/>
            <person name="Ansorge W."/>
            <person name="Unseld M."/>
            <person name="Fartmann B."/>
            <person name="Valle G."/>
            <person name="Bloecker H."/>
            <person name="Perez-Alonso M."/>
            <person name="Obermaier B."/>
            <person name="Delseny M."/>
            <person name="Boutry M."/>
            <person name="Grivell L.A."/>
            <person name="Mache R."/>
            <person name="Puigdomenech P."/>
            <person name="De Simone V."/>
            <person name="Choisne N."/>
            <person name="Artiguenave F."/>
            <person name="Robert C."/>
            <person name="Brottier P."/>
            <person name="Wincker P."/>
            <person name="Cattolico L."/>
            <person name="Weissenbach J."/>
            <person name="Saurin W."/>
            <person name="Quetier F."/>
            <person name="Schaefer M."/>
            <person name="Mueller-Auer S."/>
            <person name="Gabel C."/>
            <person name="Fuchs M."/>
            <person name="Benes V."/>
            <person name="Wurmbach E."/>
            <person name="Drzonek H."/>
            <person name="Erfle H."/>
            <person name="Jordan N."/>
            <person name="Bangert S."/>
            <person name="Wiedelmann R."/>
            <person name="Kranz H."/>
            <person name="Voss H."/>
            <person name="Holland R."/>
            <person name="Brandt P."/>
            <person name="Nyakatura G."/>
            <person name="Vezzi A."/>
            <person name="D'Angelo M."/>
            <person name="Pallavicini A."/>
            <person name="Toppo S."/>
            <person name="Simionati B."/>
            <person name="Conrad A."/>
            <person name="Hornischer K."/>
            <person name="Kauer G."/>
            <person name="Loehnert T.-H."/>
            <person name="Nordsiek G."/>
            <person name="Reichelt J."/>
            <person name="Scharfe M."/>
            <person name="Schoen O."/>
            <person name="Bargues M."/>
            <person name="Terol J."/>
            <person name="Climent J."/>
            <person name="Navarro P."/>
            <person name="Collado C."/>
            <person name="Perez-Perez A."/>
            <person name="Ottenwaelder B."/>
            <person name="Duchemin D."/>
            <person name="Cooke R."/>
            <person name="Laudie M."/>
            <person name="Berger-Llauro C."/>
            <person name="Purnelle B."/>
            <person name="Masuy D."/>
            <person name="de Haan M."/>
            <person name="Maarse A.C."/>
            <person name="Alcaraz J.-P."/>
            <person name="Cottet A."/>
            <person name="Casacuberta E."/>
            <person name="Monfort A."/>
            <person name="Argiriou A."/>
            <person name="Flores M."/>
            <person name="Liguori R."/>
            <person name="Vitale D."/>
            <person name="Mannhaupt G."/>
            <person name="Haase D."/>
            <person name="Schoof H."/>
            <person name="Rudd S."/>
            <person name="Zaccaria P."/>
            <person name="Mewes H.-W."/>
            <person name="Mayer K.F.X."/>
            <person name="Kaul S."/>
            <person name="Town C.D."/>
            <person name="Koo H.L."/>
            <person name="Tallon L.J."/>
            <person name="Jenkins J."/>
            <person name="Rooney T."/>
            <person name="Rizzo M."/>
            <person name="Walts A."/>
            <person name="Utterback T."/>
            <person name="Fujii C.Y."/>
            <person name="Shea T.P."/>
            <person name="Creasy T.H."/>
            <person name="Haas B."/>
            <person name="Maiti R."/>
            <person name="Wu D."/>
            <person name="Peterson J."/>
            <person name="Van Aken S."/>
            <person name="Pai G."/>
            <person name="Militscher J."/>
            <person name="Sellers P."/>
            <person name="Gill J.E."/>
            <person name="Feldblyum T.V."/>
            <person name="Preuss D."/>
            <person name="Lin X."/>
            <person name="Nierman W.C."/>
            <person name="Salzberg S.L."/>
            <person name="White O."/>
            <person name="Venter J.C."/>
            <person name="Fraser C.M."/>
            <person name="Kaneko T."/>
            <person name="Nakamura Y."/>
            <person name="Sato S."/>
            <person name="Kato T."/>
            <person name="Asamizu E."/>
            <person name="Sasamoto S."/>
            <person name="Kimura T."/>
            <person name="Idesawa K."/>
            <person name="Kawashima K."/>
            <person name="Kishida Y."/>
            <person name="Kiyokawa C."/>
            <person name="Kohara M."/>
            <person name="Matsumoto M."/>
            <person name="Matsuno A."/>
            <person name="Muraki A."/>
            <person name="Nakayama S."/>
            <person name="Nakazaki N."/>
            <person name="Shinpo S."/>
            <person name="Takeuchi C."/>
            <person name="Wada T."/>
            <person name="Watanabe A."/>
            <person name="Yamada M."/>
            <person name="Yasuda M."/>
            <person name="Tabata S."/>
        </authorList>
    </citation>
    <scope>NUCLEOTIDE SEQUENCE [LARGE SCALE GENOMIC DNA]</scope>
    <source>
        <strain>cv. Columbia</strain>
    </source>
</reference>
<reference key="2">
    <citation type="journal article" date="2017" name="Plant J.">
        <title>Araport11: a complete reannotation of the Arabidopsis thaliana reference genome.</title>
        <authorList>
            <person name="Cheng C.Y."/>
            <person name="Krishnakumar V."/>
            <person name="Chan A.P."/>
            <person name="Thibaud-Nissen F."/>
            <person name="Schobel S."/>
            <person name="Town C.D."/>
        </authorList>
    </citation>
    <scope>GENOME REANNOTATION</scope>
    <source>
        <strain>cv. Columbia</strain>
    </source>
</reference>
<reference evidence="3" key="3">
    <citation type="journal article" date="2001" name="Plant Mol. Biol.">
        <title>Two large Arabidopsis thaliana gene families are homologous to the Brassica gene superfamily that encodes pollen coat proteins and the male component of the self-incompatibility response.</title>
        <authorList>
            <person name="Vanoosthuyse V."/>
            <person name="Miege C."/>
            <person name="Dumas C."/>
            <person name="Cock J.M."/>
        </authorList>
    </citation>
    <scope>IDENTIFICATION</scope>
</reference>
<reference key="4">
    <citation type="journal article" date="2005" name="Plant Physiol.">
        <title>Genome organization of more than 300 defensin-like genes in Arabidopsis.</title>
        <authorList>
            <person name="Silverstein K.A.T."/>
            <person name="Graham M.A."/>
            <person name="Paape T.D."/>
            <person name="VandenBosch K.A."/>
        </authorList>
    </citation>
    <scope>GENE FAMILY</scope>
</reference>
<comment type="subcellular location">
    <subcellularLocation>
        <location evidence="1">Secreted</location>
    </subcellularLocation>
</comment>
<comment type="similarity">
    <text evidence="3">Belongs to the DEFL family.</text>
</comment>
<feature type="signal peptide" evidence="2">
    <location>
        <begin position="1"/>
        <end position="25"/>
    </location>
</feature>
<feature type="chain" id="PRO_0000017290" description="Putative defensin-like protein 118">
    <location>
        <begin position="26"/>
        <end position="77"/>
    </location>
</feature>
<feature type="disulfide bond" evidence="1">
    <location>
        <begin position="29"/>
        <end position="75"/>
    </location>
</feature>
<feature type="disulfide bond" evidence="1">
    <location>
        <begin position="39"/>
        <end position="58"/>
    </location>
</feature>
<feature type="disulfide bond" evidence="1">
    <location>
        <begin position="44"/>
        <end position="69"/>
    </location>
</feature>
<feature type="disulfide bond" evidence="1">
    <location>
        <begin position="48"/>
        <end position="71"/>
    </location>
</feature>
<sequence length="77" mass="8682">MSKSTILAIFMIVLVLGKVTKETQGQEMCRDILMKAKNCDEGTCDTLCKQKWKGNGSCFPNVYTYRKSCLCTFPCKT</sequence>
<keyword id="KW-0929">Antimicrobial</keyword>
<keyword id="KW-1015">Disulfide bond</keyword>
<keyword id="KW-0295">Fungicide</keyword>
<keyword id="KW-0611">Plant defense</keyword>
<keyword id="KW-1185">Reference proteome</keyword>
<keyword id="KW-0964">Secreted</keyword>
<keyword id="KW-0732">Signal</keyword>
<evidence type="ECO:0000250" key="1"/>
<evidence type="ECO:0000255" key="2"/>
<evidence type="ECO:0000305" key="3"/>
<dbReference type="EMBL" id="AL137898">
    <property type="status" value="NOT_ANNOTATED_CDS"/>
    <property type="molecule type" value="Genomic_DNA"/>
</dbReference>
<dbReference type="EMBL" id="CP002686">
    <property type="protein sequence ID" value="AEE80166.1"/>
    <property type="molecule type" value="Genomic_DNA"/>
</dbReference>
<dbReference type="RefSeq" id="NP_001030910.1">
    <property type="nucleotide sequence ID" value="NM_001035833.1"/>
</dbReference>
<dbReference type="SMR" id="P82766"/>
<dbReference type="PaxDb" id="3702-AT3G61175.1"/>
<dbReference type="ProteomicsDB" id="224090"/>
<dbReference type="EnsemblPlants" id="AT3G61175.1">
    <property type="protein sequence ID" value="AT3G61175.1"/>
    <property type="gene ID" value="AT3G61175"/>
</dbReference>
<dbReference type="GeneID" id="3769756"/>
<dbReference type="Gramene" id="AT3G61175.1">
    <property type="protein sequence ID" value="AT3G61175.1"/>
    <property type="gene ID" value="AT3G61175"/>
</dbReference>
<dbReference type="KEGG" id="ath:AT3G61175"/>
<dbReference type="Araport" id="AT3G61175"/>
<dbReference type="TAIR" id="AT3G61175">
    <property type="gene designation" value="LCR52"/>
</dbReference>
<dbReference type="HOGENOM" id="CLU_182511_2_0_1"/>
<dbReference type="InParanoid" id="P82766"/>
<dbReference type="OMA" id="KAKNCDE"/>
<dbReference type="PhylomeDB" id="P82766"/>
<dbReference type="PRO" id="PR:P82766"/>
<dbReference type="Proteomes" id="UP000006548">
    <property type="component" value="Chromosome 3"/>
</dbReference>
<dbReference type="ExpressionAtlas" id="P82766">
    <property type="expression patterns" value="baseline"/>
</dbReference>
<dbReference type="GO" id="GO:0005576">
    <property type="term" value="C:extracellular region"/>
    <property type="evidence" value="ECO:0007669"/>
    <property type="project" value="UniProtKB-SubCell"/>
</dbReference>
<dbReference type="GO" id="GO:0050832">
    <property type="term" value="P:defense response to fungus"/>
    <property type="evidence" value="ECO:0007669"/>
    <property type="project" value="UniProtKB-KW"/>
</dbReference>
<dbReference type="GO" id="GO:0031640">
    <property type="term" value="P:killing of cells of another organism"/>
    <property type="evidence" value="ECO:0007669"/>
    <property type="project" value="UniProtKB-KW"/>
</dbReference>
<dbReference type="InterPro" id="IPR010851">
    <property type="entry name" value="DEFL"/>
</dbReference>
<dbReference type="PANTHER" id="PTHR33830:SF10">
    <property type="entry name" value="DEFENSIN-LIKE PROTEIN 122-RELATED"/>
    <property type="match status" value="1"/>
</dbReference>
<dbReference type="PANTHER" id="PTHR33830">
    <property type="entry name" value="DEFENSIN-LIKE PROTEIN 184-RELATED"/>
    <property type="match status" value="1"/>
</dbReference>
<dbReference type="Pfam" id="PF07333">
    <property type="entry name" value="SLR1-BP"/>
    <property type="match status" value="1"/>
</dbReference>
<accession>P82766</accession>
<proteinExistence type="inferred from homology"/>